<proteinExistence type="inferred from homology"/>
<reference key="1">
    <citation type="submission" date="2006-05" db="EMBL/GenBank/DDBJ databases">
        <title>Complete sequence of chromosome of Silicibacter sp. TM1040.</title>
        <authorList>
            <consortium name="US DOE Joint Genome Institute"/>
            <person name="Copeland A."/>
            <person name="Lucas S."/>
            <person name="Lapidus A."/>
            <person name="Barry K."/>
            <person name="Detter J.C."/>
            <person name="Glavina del Rio T."/>
            <person name="Hammon N."/>
            <person name="Israni S."/>
            <person name="Dalin E."/>
            <person name="Tice H."/>
            <person name="Pitluck S."/>
            <person name="Brettin T."/>
            <person name="Bruce D."/>
            <person name="Han C."/>
            <person name="Tapia R."/>
            <person name="Goodwin L."/>
            <person name="Thompson L.S."/>
            <person name="Gilna P."/>
            <person name="Schmutz J."/>
            <person name="Larimer F."/>
            <person name="Land M."/>
            <person name="Hauser L."/>
            <person name="Kyrpides N."/>
            <person name="Kim E."/>
            <person name="Belas R."/>
            <person name="Moran M.A."/>
            <person name="Buchan A."/>
            <person name="Gonzalez J.M."/>
            <person name="Schell M.A."/>
            <person name="Sun F."/>
            <person name="Richardson P."/>
        </authorList>
    </citation>
    <scope>NUCLEOTIDE SEQUENCE [LARGE SCALE GENOMIC DNA]</scope>
    <source>
        <strain>TM1040</strain>
    </source>
</reference>
<dbReference type="EMBL" id="CP000377">
    <property type="protein sequence ID" value="ABF62998.1"/>
    <property type="molecule type" value="Genomic_DNA"/>
</dbReference>
<dbReference type="RefSeq" id="WP_005621849.1">
    <property type="nucleotide sequence ID" value="NC_008044.1"/>
</dbReference>
<dbReference type="SMR" id="Q1GK18"/>
<dbReference type="STRING" id="292414.TM1040_0265"/>
<dbReference type="GeneID" id="28248376"/>
<dbReference type="KEGG" id="sit:TM1040_0265"/>
<dbReference type="eggNOG" id="COG0198">
    <property type="taxonomic scope" value="Bacteria"/>
</dbReference>
<dbReference type="HOGENOM" id="CLU_093315_2_2_5"/>
<dbReference type="OrthoDB" id="9807419at2"/>
<dbReference type="Proteomes" id="UP000000636">
    <property type="component" value="Chromosome"/>
</dbReference>
<dbReference type="GO" id="GO:1990904">
    <property type="term" value="C:ribonucleoprotein complex"/>
    <property type="evidence" value="ECO:0007669"/>
    <property type="project" value="UniProtKB-KW"/>
</dbReference>
<dbReference type="GO" id="GO:0005840">
    <property type="term" value="C:ribosome"/>
    <property type="evidence" value="ECO:0007669"/>
    <property type="project" value="UniProtKB-KW"/>
</dbReference>
<dbReference type="GO" id="GO:0019843">
    <property type="term" value="F:rRNA binding"/>
    <property type="evidence" value="ECO:0007669"/>
    <property type="project" value="UniProtKB-UniRule"/>
</dbReference>
<dbReference type="GO" id="GO:0003735">
    <property type="term" value="F:structural constituent of ribosome"/>
    <property type="evidence" value="ECO:0007669"/>
    <property type="project" value="InterPro"/>
</dbReference>
<dbReference type="GO" id="GO:0006412">
    <property type="term" value="P:translation"/>
    <property type="evidence" value="ECO:0007669"/>
    <property type="project" value="UniProtKB-UniRule"/>
</dbReference>
<dbReference type="CDD" id="cd06089">
    <property type="entry name" value="KOW_RPL26"/>
    <property type="match status" value="1"/>
</dbReference>
<dbReference type="Gene3D" id="2.30.30.30">
    <property type="match status" value="1"/>
</dbReference>
<dbReference type="HAMAP" id="MF_01326_B">
    <property type="entry name" value="Ribosomal_uL24_B"/>
    <property type="match status" value="1"/>
</dbReference>
<dbReference type="InterPro" id="IPR005824">
    <property type="entry name" value="KOW"/>
</dbReference>
<dbReference type="InterPro" id="IPR014722">
    <property type="entry name" value="Rib_uL2_dom2"/>
</dbReference>
<dbReference type="InterPro" id="IPR003256">
    <property type="entry name" value="Ribosomal_uL24"/>
</dbReference>
<dbReference type="InterPro" id="IPR005825">
    <property type="entry name" value="Ribosomal_uL24_CS"/>
</dbReference>
<dbReference type="InterPro" id="IPR041988">
    <property type="entry name" value="Ribosomal_uL24_KOW"/>
</dbReference>
<dbReference type="InterPro" id="IPR008991">
    <property type="entry name" value="Translation_prot_SH3-like_sf"/>
</dbReference>
<dbReference type="NCBIfam" id="TIGR01079">
    <property type="entry name" value="rplX_bact"/>
    <property type="match status" value="1"/>
</dbReference>
<dbReference type="PANTHER" id="PTHR12903">
    <property type="entry name" value="MITOCHONDRIAL RIBOSOMAL PROTEIN L24"/>
    <property type="match status" value="1"/>
</dbReference>
<dbReference type="Pfam" id="PF00467">
    <property type="entry name" value="KOW"/>
    <property type="match status" value="1"/>
</dbReference>
<dbReference type="Pfam" id="PF17136">
    <property type="entry name" value="ribosomal_L24"/>
    <property type="match status" value="1"/>
</dbReference>
<dbReference type="SMART" id="SM00739">
    <property type="entry name" value="KOW"/>
    <property type="match status" value="1"/>
</dbReference>
<dbReference type="SUPFAM" id="SSF50104">
    <property type="entry name" value="Translation proteins SH3-like domain"/>
    <property type="match status" value="1"/>
</dbReference>
<dbReference type="PROSITE" id="PS01108">
    <property type="entry name" value="RIBOSOMAL_L24"/>
    <property type="match status" value="1"/>
</dbReference>
<evidence type="ECO:0000255" key="1">
    <source>
        <dbReference type="HAMAP-Rule" id="MF_01326"/>
    </source>
</evidence>
<evidence type="ECO:0000305" key="2"/>
<sequence length="101" mass="10699">MAAKLRKGDKVVVLAGRDKGKEGTIASVDPKAGKAVVDGVNMAIRHTRQTQTSQGGRLPKALPIDLSNLALLDSNGKATRVGFREEDGKKVRFAKTTGETV</sequence>
<protein>
    <recommendedName>
        <fullName evidence="1">Large ribosomal subunit protein uL24</fullName>
    </recommendedName>
    <alternativeName>
        <fullName evidence="2">50S ribosomal protein L24</fullName>
    </alternativeName>
</protein>
<feature type="chain" id="PRO_1000052314" description="Large ribosomal subunit protein uL24">
    <location>
        <begin position="1"/>
        <end position="101"/>
    </location>
</feature>
<organism>
    <name type="scientific">Ruegeria sp. (strain TM1040)</name>
    <name type="common">Silicibacter sp.</name>
    <dbReference type="NCBI Taxonomy" id="292414"/>
    <lineage>
        <taxon>Bacteria</taxon>
        <taxon>Pseudomonadati</taxon>
        <taxon>Pseudomonadota</taxon>
        <taxon>Alphaproteobacteria</taxon>
        <taxon>Rhodobacterales</taxon>
        <taxon>Roseobacteraceae</taxon>
        <taxon>Ruegeria</taxon>
    </lineage>
</organism>
<accession>Q1GK18</accession>
<gene>
    <name evidence="1" type="primary">rplX</name>
    <name type="ordered locus">TM1040_0265</name>
</gene>
<comment type="function">
    <text evidence="1">One of two assembly initiator proteins, it binds directly to the 5'-end of the 23S rRNA, where it nucleates assembly of the 50S subunit.</text>
</comment>
<comment type="function">
    <text evidence="1">One of the proteins that surrounds the polypeptide exit tunnel on the outside of the subunit.</text>
</comment>
<comment type="subunit">
    <text evidence="1">Part of the 50S ribosomal subunit.</text>
</comment>
<comment type="similarity">
    <text evidence="1">Belongs to the universal ribosomal protein uL24 family.</text>
</comment>
<keyword id="KW-1185">Reference proteome</keyword>
<keyword id="KW-0687">Ribonucleoprotein</keyword>
<keyword id="KW-0689">Ribosomal protein</keyword>
<keyword id="KW-0694">RNA-binding</keyword>
<keyword id="KW-0699">rRNA-binding</keyword>
<name>RL24_RUEST</name>